<dbReference type="EMBL" id="CP001598">
    <property type="protein sequence ID" value="ACQ47137.1"/>
    <property type="molecule type" value="Genomic_DNA"/>
</dbReference>
<dbReference type="RefSeq" id="WP_000532948.1">
    <property type="nucleotide sequence ID" value="NC_012659.1"/>
</dbReference>
<dbReference type="SMR" id="C3NZC1"/>
<dbReference type="GeneID" id="45020606"/>
<dbReference type="KEGG" id="bai:BAA_0622"/>
<dbReference type="HOGENOM" id="CLU_062974_2_0_9"/>
<dbReference type="GO" id="GO:0005829">
    <property type="term" value="C:cytosol"/>
    <property type="evidence" value="ECO:0007669"/>
    <property type="project" value="TreeGrafter"/>
</dbReference>
<dbReference type="GO" id="GO:0003677">
    <property type="term" value="F:DNA binding"/>
    <property type="evidence" value="ECO:0007669"/>
    <property type="project" value="UniProtKB-UniRule"/>
</dbReference>
<dbReference type="GO" id="GO:0006355">
    <property type="term" value="P:regulation of DNA-templated transcription"/>
    <property type="evidence" value="ECO:0007669"/>
    <property type="project" value="UniProtKB-UniRule"/>
</dbReference>
<dbReference type="FunFam" id="1.10.10.200:FF:000003">
    <property type="entry name" value="Probable transcriptional regulatory protein YeeN"/>
    <property type="match status" value="1"/>
</dbReference>
<dbReference type="FunFam" id="3.30.70.980:FF:000004">
    <property type="entry name" value="Probable transcriptional regulatory protein YeeN"/>
    <property type="match status" value="1"/>
</dbReference>
<dbReference type="Gene3D" id="1.10.10.200">
    <property type="match status" value="1"/>
</dbReference>
<dbReference type="Gene3D" id="3.30.70.980">
    <property type="match status" value="2"/>
</dbReference>
<dbReference type="HAMAP" id="MF_00693">
    <property type="entry name" value="Transcrip_reg_TACO1"/>
    <property type="match status" value="1"/>
</dbReference>
<dbReference type="HAMAP" id="MF_00918">
    <property type="entry name" value="Transcrip_reg_TACO1_YeeN"/>
    <property type="match status" value="1"/>
</dbReference>
<dbReference type="InterPro" id="IPR017856">
    <property type="entry name" value="Integrase-like_N"/>
</dbReference>
<dbReference type="InterPro" id="IPR048300">
    <property type="entry name" value="TACO1_YebC-like_2nd/3rd_dom"/>
</dbReference>
<dbReference type="InterPro" id="IPR049083">
    <property type="entry name" value="TACO1_YebC_N"/>
</dbReference>
<dbReference type="InterPro" id="IPR002876">
    <property type="entry name" value="Transcrip_reg_TACO1-like"/>
</dbReference>
<dbReference type="InterPro" id="IPR026564">
    <property type="entry name" value="Transcrip_reg_TACO1-like_dom3"/>
</dbReference>
<dbReference type="InterPro" id="IPR026562">
    <property type="entry name" value="Transcrip_reg_TACO1_YeeN"/>
</dbReference>
<dbReference type="InterPro" id="IPR029072">
    <property type="entry name" value="YebC-like"/>
</dbReference>
<dbReference type="NCBIfam" id="NF001030">
    <property type="entry name" value="PRK00110.1"/>
    <property type="match status" value="1"/>
</dbReference>
<dbReference type="NCBIfam" id="NF009044">
    <property type="entry name" value="PRK12378.1"/>
    <property type="match status" value="1"/>
</dbReference>
<dbReference type="NCBIfam" id="TIGR01033">
    <property type="entry name" value="YebC/PmpR family DNA-binding transcriptional regulator"/>
    <property type="match status" value="1"/>
</dbReference>
<dbReference type="PANTHER" id="PTHR12532">
    <property type="entry name" value="TRANSLATIONAL ACTIVATOR OF CYTOCHROME C OXIDASE 1"/>
    <property type="match status" value="1"/>
</dbReference>
<dbReference type="PANTHER" id="PTHR12532:SF0">
    <property type="entry name" value="TRANSLATIONAL ACTIVATOR OF CYTOCHROME C OXIDASE 1"/>
    <property type="match status" value="1"/>
</dbReference>
<dbReference type="Pfam" id="PF20772">
    <property type="entry name" value="TACO1_YebC_N"/>
    <property type="match status" value="1"/>
</dbReference>
<dbReference type="Pfam" id="PF01709">
    <property type="entry name" value="Transcrip_reg"/>
    <property type="match status" value="1"/>
</dbReference>
<dbReference type="SUPFAM" id="SSF75625">
    <property type="entry name" value="YebC-like"/>
    <property type="match status" value="1"/>
</dbReference>
<protein>
    <recommendedName>
        <fullName evidence="1">Probable transcriptional regulatory protein BAA_0622</fullName>
    </recommendedName>
</protein>
<sequence>MGRKWNNIKDKKASKDANTSRIYAKFGREIYVAAKQGEPDPESNQALRVVLERAKTYNVPRTIIDRAVEKAKGGSEENYDELRYEGFGPNGAMVIVDTLTNNVNRTAADVRAAFSKNSGNMGVNGSVAYMFDATAVIGLEGKTSDEVLEILMEADVDARDILEEEDAVIVYAEPDQFHAVQSALKDAGVEEFTVAELTMLAQNDVTLPEDAQAQFEKMVDALEDLEDVQQVYHNVDLGE</sequence>
<reference key="1">
    <citation type="submission" date="2009-04" db="EMBL/GenBank/DDBJ databases">
        <title>Genome sequence of Bacillus anthracis A0248.</title>
        <authorList>
            <person name="Dodson R.J."/>
            <person name="Munk A.C."/>
            <person name="Bruce D."/>
            <person name="Detter C."/>
            <person name="Tapia R."/>
            <person name="Sutton G."/>
            <person name="Sims D."/>
            <person name="Brettin T."/>
        </authorList>
    </citation>
    <scope>NUCLEOTIDE SEQUENCE [LARGE SCALE GENOMIC DNA]</scope>
    <source>
        <strain>A0248</strain>
    </source>
</reference>
<organism>
    <name type="scientific">Bacillus anthracis (strain A0248)</name>
    <dbReference type="NCBI Taxonomy" id="592021"/>
    <lineage>
        <taxon>Bacteria</taxon>
        <taxon>Bacillati</taxon>
        <taxon>Bacillota</taxon>
        <taxon>Bacilli</taxon>
        <taxon>Bacillales</taxon>
        <taxon>Bacillaceae</taxon>
        <taxon>Bacillus</taxon>
        <taxon>Bacillus cereus group</taxon>
    </lineage>
</organism>
<feature type="chain" id="PRO_1000200074" description="Probable transcriptional regulatory protein BAA_0622">
    <location>
        <begin position="1"/>
        <end position="239"/>
    </location>
</feature>
<proteinExistence type="inferred from homology"/>
<name>Y622_BACAA</name>
<keyword id="KW-0963">Cytoplasm</keyword>
<keyword id="KW-0238">DNA-binding</keyword>
<keyword id="KW-0804">Transcription</keyword>
<keyword id="KW-0805">Transcription regulation</keyword>
<comment type="subcellular location">
    <subcellularLocation>
        <location evidence="1">Cytoplasm</location>
    </subcellularLocation>
</comment>
<comment type="similarity">
    <text evidence="1">Belongs to the TACO1 family. YeeN subfamily.</text>
</comment>
<evidence type="ECO:0000255" key="1">
    <source>
        <dbReference type="HAMAP-Rule" id="MF_00918"/>
    </source>
</evidence>
<accession>C3NZC1</accession>
<gene>
    <name type="ordered locus">BAA_0622</name>
</gene>